<name>OPAC_NEIGO</name>
<feature type="signal peptide" evidence="1">
    <location>
        <begin position="1" status="less than"/>
        <end position="1"/>
    </location>
</feature>
<feature type="chain" id="PRO_0000021907" description="Opacity protein opA50">
    <location>
        <begin position="2"/>
        <end position="236" status="greater than"/>
    </location>
</feature>
<feature type="non-terminal residue">
    <location>
        <position position="1"/>
    </location>
</feature>
<feature type="non-terminal residue">
    <location>
        <position position="236"/>
    </location>
</feature>
<dbReference type="EMBL" id="M14746">
    <property type="status" value="NOT_ANNOTATED_CDS"/>
    <property type="molecule type" value="Genomic_DNA"/>
</dbReference>
<dbReference type="EMBL" id="X52370">
    <property type="status" value="NOT_ANNOTATED_CDS"/>
    <property type="molecule type" value="Genomic_DNA"/>
</dbReference>
<dbReference type="EMBL" id="Z18927">
    <property type="protein sequence ID" value="CAA79360.1"/>
    <property type="molecule type" value="Genomic_DNA"/>
</dbReference>
<dbReference type="PIR" id="S16618">
    <property type="entry name" value="KONH0"/>
</dbReference>
<dbReference type="SMR" id="P11296"/>
<dbReference type="Reactome" id="R-HSA-202733">
    <property type="pathway name" value="Cell surface interactions at the vascular wall"/>
</dbReference>
<dbReference type="GO" id="GO:0009279">
    <property type="term" value="C:cell outer membrane"/>
    <property type="evidence" value="ECO:0000304"/>
    <property type="project" value="Reactome"/>
</dbReference>
<dbReference type="GO" id="GO:0015288">
    <property type="term" value="F:porin activity"/>
    <property type="evidence" value="ECO:0007669"/>
    <property type="project" value="InterPro"/>
</dbReference>
<dbReference type="FunFam" id="2.40.160.20:FF:000005">
    <property type="entry name" value="Opacity protein opA54"/>
    <property type="match status" value="1"/>
</dbReference>
<dbReference type="Gene3D" id="2.40.160.20">
    <property type="match status" value="1"/>
</dbReference>
<dbReference type="InterPro" id="IPR011250">
    <property type="entry name" value="OMP/PagP_b-brl"/>
</dbReference>
<dbReference type="InterPro" id="IPR003394">
    <property type="entry name" value="Porin_opacity"/>
</dbReference>
<dbReference type="Pfam" id="PF02462">
    <property type="entry name" value="Opacity"/>
    <property type="match status" value="1"/>
</dbReference>
<dbReference type="SUPFAM" id="SSF56925">
    <property type="entry name" value="OMPA-like"/>
    <property type="match status" value="1"/>
</dbReference>
<keyword id="KW-0998">Cell outer membrane</keyword>
<keyword id="KW-0903">Direct protein sequencing</keyword>
<keyword id="KW-0472">Membrane</keyword>
<keyword id="KW-0732">Signal</keyword>
<keyword id="KW-0812">Transmembrane</keyword>
<keyword id="KW-1134">Transmembrane beta strand</keyword>
<gene>
    <name type="primary">opaC</name>
</gene>
<proteinExistence type="evidence at protein level"/>
<organism>
    <name type="scientific">Neisseria gonorrhoeae</name>
    <dbReference type="NCBI Taxonomy" id="485"/>
    <lineage>
        <taxon>Bacteria</taxon>
        <taxon>Pseudomonadati</taxon>
        <taxon>Pseudomonadota</taxon>
        <taxon>Betaproteobacteria</taxon>
        <taxon>Neisseriales</taxon>
        <taxon>Neisseriaceae</taxon>
        <taxon>Neisseria</taxon>
    </lineage>
</organism>
<sequence length="236" mass="26685">ASEDGGRGPYVQADLAYAYEHITHDYPKPTDPSKGKISTVSDYFRNIRTHSIHPRVSVGYDFGGWRIAADYARYRKWSDNKYSVSIKNMRVHKHNSNRKNLKTENQENGSFHAVSSLGLSAIYDFQINDKFKPYIGARVAYGHVRHSIDSTKKITGLLTTSTPGIMSGVYKVLRTPGAHRESDSIRRVGLGVIAGVGFDITPKLTLDAGYRYHNWGRLENTRFKTHEASLGVRYRF</sequence>
<evidence type="ECO:0000255" key="1"/>
<evidence type="ECO:0000305" key="2"/>
<reference key="1">
    <citation type="journal article" date="1986" name="Cell">
        <title>Opacity genes in Neisseria gonorrhoeae: control of phase and antigenic variation.</title>
        <authorList>
            <person name="Stern A."/>
            <person name="Brown M."/>
            <person name="Nickel P."/>
            <person name="Meyer T.F."/>
        </authorList>
    </citation>
    <scope>NUCLEOTIDE SEQUENCE [GENOMIC DNA]</scope>
    <scope>PARTIAL PROTEIN SEQUENCE</scope>
    <source>
        <strain>MS11 / V0</strain>
    </source>
</reference>
<reference key="2">
    <citation type="journal article" date="1991" name="Mol. Microbiol.">
        <title>The opacity proteins of Neisseria gonorrhoeae strain MS11 are encoded by a family of 11 complete genes.</title>
        <authorList>
            <person name="Bhat K.S."/>
            <person name="Gibbs C.P."/>
            <person name="Barrera O."/>
            <person name="Morrison S.G."/>
            <person name="Jaehnig F."/>
            <person name="Stern A."/>
            <person name="Kupsch E.-M."/>
            <person name="Meyer T.F."/>
            <person name="Swanson J."/>
        </authorList>
    </citation>
    <scope>NUCLEOTIDE SEQUENCE [GENOMIC DNA]</scope>
</reference>
<reference key="3">
    <citation type="journal article" date="1993" name="EMBO J.">
        <title>Variable opacity (Opa) outer membrane proteins account for the cell tropisms displayed by Neisseria gonorrhoeae for human leukocytes and epithelial cells.</title>
        <authorList>
            <person name="Kupsch E.-M."/>
            <person name="Knepper B."/>
            <person name="Kuroki T."/>
            <person name="Heuer I."/>
            <person name="Meyer T.F."/>
        </authorList>
    </citation>
    <scope>NUCLEOTIDE SEQUENCE [GENOMIC DNA]</scope>
    <source>
        <strain>MS11 / F3</strain>
    </source>
</reference>
<protein>
    <recommendedName>
        <fullName>Opacity protein opA50</fullName>
    </recommendedName>
    <alternativeName>
        <fullName>V0</fullName>
    </alternativeName>
    <alternativeName>
        <fullName>opA30</fullName>
    </alternativeName>
</protein>
<comment type="function">
    <text>Implicated in a number of adherence functions. OPA proteins are implicated in pathogenesis and are subject to phase variation.</text>
</comment>
<comment type="subcellular location">
    <subcellularLocation>
        <location>Cell outer membrane</location>
    </subcellularLocation>
</comment>
<comment type="miscellaneous">
    <text>Expression of opacity proteins is regulated by the number of translated repeat elements CTCTT, which code for part of the signal sequence; the protein can only be synthesized when the number of repeats place the start codon in frame with the rest of the protein.</text>
</comment>
<comment type="similarity">
    <text evidence="2">Belongs to the opacity porin family.</text>
</comment>
<accession>P11296</accession>